<evidence type="ECO:0000269" key="1">
    <source>
    </source>
</evidence>
<evidence type="ECO:0000303" key="2">
    <source>
    </source>
</evidence>
<feature type="chain" id="PRO_0000371478" description="Uncharacterized protein IMPP17">
    <location>
        <begin position="1" status="less than"/>
        <end position="14" status="greater than"/>
    </location>
</feature>
<feature type="non-terminal residue" evidence="2">
    <location>
        <position position="1"/>
    </location>
</feature>
<feature type="non-terminal residue" evidence="2">
    <location>
        <position position="14"/>
    </location>
</feature>
<comment type="tissue specificity">
    <text evidence="1">Nacreous layer of shell.</text>
</comment>
<name>IMP17_NAUMA</name>
<sequence length="14" mass="1708">YYEEYVDGQGMVVR</sequence>
<accession>P85366</accession>
<proteinExistence type="evidence at protein level"/>
<reference key="1">
    <citation type="journal article" date="2009" name="ChemBioChem">
        <title>Evolution of nacre: biochemistry and 'shellomics' of the shell organic matrix of the cephalopod Nautilus macromphalus.</title>
        <authorList>
            <person name="Marie B."/>
            <person name="Marin F."/>
            <person name="Marie A."/>
            <person name="Bedouet L."/>
            <person name="Dubost L."/>
            <person name="Alcaraz G."/>
            <person name="Milet C."/>
            <person name="Luquet G."/>
        </authorList>
    </citation>
    <scope>PROTEIN SEQUENCE</scope>
    <scope>TISSUE SPECIFICITY</scope>
    <source>
        <tissue>Shell</tissue>
    </source>
</reference>
<keyword id="KW-0903">Direct protein sequencing</keyword>
<protein>
    <recommendedName>
        <fullName evidence="2">Uncharacterized protein IMPP17</fullName>
    </recommendedName>
</protein>
<organism>
    <name type="scientific">Nautilus macromphalus</name>
    <name type="common">Bellybutton nautilus</name>
    <dbReference type="NCBI Taxonomy" id="34576"/>
    <lineage>
        <taxon>Eukaryota</taxon>
        <taxon>Metazoa</taxon>
        <taxon>Spiralia</taxon>
        <taxon>Lophotrochozoa</taxon>
        <taxon>Mollusca</taxon>
        <taxon>Cephalopoda</taxon>
        <taxon>Nautiloidea</taxon>
        <taxon>Nautilida</taxon>
        <taxon>Nautilidae</taxon>
        <taxon>Nautilus</taxon>
    </lineage>
</organism>